<proteinExistence type="inferred from homology"/>
<comment type="function">
    <text evidence="1">Is required not only for elongation of protein synthesis but also for the initiation of all mRNA translation through initiator tRNA(fMet) aminoacylation.</text>
</comment>
<comment type="catalytic activity">
    <reaction evidence="1">
        <text>tRNA(Met) + L-methionine + ATP = L-methionyl-tRNA(Met) + AMP + diphosphate</text>
        <dbReference type="Rhea" id="RHEA:13481"/>
        <dbReference type="Rhea" id="RHEA-COMP:9667"/>
        <dbReference type="Rhea" id="RHEA-COMP:9698"/>
        <dbReference type="ChEBI" id="CHEBI:30616"/>
        <dbReference type="ChEBI" id="CHEBI:33019"/>
        <dbReference type="ChEBI" id="CHEBI:57844"/>
        <dbReference type="ChEBI" id="CHEBI:78442"/>
        <dbReference type="ChEBI" id="CHEBI:78530"/>
        <dbReference type="ChEBI" id="CHEBI:456215"/>
        <dbReference type="EC" id="6.1.1.10"/>
    </reaction>
</comment>
<comment type="cofactor">
    <cofactor evidence="1">
        <name>Zn(2+)</name>
        <dbReference type="ChEBI" id="CHEBI:29105"/>
    </cofactor>
    <text evidence="1">Binds 1 zinc ion per subunit.</text>
</comment>
<comment type="subunit">
    <text evidence="1">Homodimer.</text>
</comment>
<comment type="subcellular location">
    <subcellularLocation>
        <location evidence="1">Cytoplasm</location>
    </subcellularLocation>
</comment>
<comment type="similarity">
    <text evidence="1">Belongs to the class-I aminoacyl-tRNA synthetase family. MetG type 1 subfamily.</text>
</comment>
<comment type="sequence caution" evidence="2">
    <conflict type="erroneous initiation">
        <sequence resource="EMBL-CDS" id="ABX20666"/>
    </conflict>
</comment>
<reference key="1">
    <citation type="submission" date="2007-11" db="EMBL/GenBank/DDBJ databases">
        <authorList>
            <consortium name="The Salmonella enterica serovar Arizonae Genome Sequencing Project"/>
            <person name="McClelland M."/>
            <person name="Sanderson E.K."/>
            <person name="Porwollik S."/>
            <person name="Spieth J."/>
            <person name="Clifton W.S."/>
            <person name="Fulton R."/>
            <person name="Chunyan W."/>
            <person name="Wollam A."/>
            <person name="Shah N."/>
            <person name="Pepin K."/>
            <person name="Bhonagiri V."/>
            <person name="Nash W."/>
            <person name="Johnson M."/>
            <person name="Thiruvilangam P."/>
            <person name="Wilson R."/>
        </authorList>
    </citation>
    <scope>NUCLEOTIDE SEQUENCE [LARGE SCALE GENOMIC DNA]</scope>
    <source>
        <strain>ATCC BAA-731 / CDC346-86 / RSK2980</strain>
    </source>
</reference>
<gene>
    <name evidence="1" type="primary">metG</name>
    <name type="ordered locus">SARI_00743</name>
</gene>
<accession>A9MKV0</accession>
<feature type="chain" id="PRO_0000331899" description="Methionine--tRNA ligase">
    <location>
        <begin position="1"/>
        <end position="677"/>
    </location>
</feature>
<feature type="domain" description="tRNA-binding" evidence="1">
    <location>
        <begin position="575"/>
        <end position="677"/>
    </location>
</feature>
<feature type="short sequence motif" description="'HIGH' region">
    <location>
        <begin position="15"/>
        <end position="25"/>
    </location>
</feature>
<feature type="short sequence motif" description="'KMSKS' region">
    <location>
        <begin position="333"/>
        <end position="337"/>
    </location>
</feature>
<feature type="binding site" evidence="1">
    <location>
        <position position="146"/>
    </location>
    <ligand>
        <name>Zn(2+)</name>
        <dbReference type="ChEBI" id="CHEBI:29105"/>
    </ligand>
</feature>
<feature type="binding site" evidence="1">
    <location>
        <position position="149"/>
    </location>
    <ligand>
        <name>Zn(2+)</name>
        <dbReference type="ChEBI" id="CHEBI:29105"/>
    </ligand>
</feature>
<feature type="binding site" evidence="1">
    <location>
        <position position="159"/>
    </location>
    <ligand>
        <name>Zn(2+)</name>
        <dbReference type="ChEBI" id="CHEBI:29105"/>
    </ligand>
</feature>
<feature type="binding site" evidence="1">
    <location>
        <position position="162"/>
    </location>
    <ligand>
        <name>Zn(2+)</name>
        <dbReference type="ChEBI" id="CHEBI:29105"/>
    </ligand>
</feature>
<feature type="binding site" evidence="1">
    <location>
        <position position="336"/>
    </location>
    <ligand>
        <name>ATP</name>
        <dbReference type="ChEBI" id="CHEBI:30616"/>
    </ligand>
</feature>
<sequence>MTQVAKKILVTCALPYANGSIHLGHMLEHIQADVWVRYQRMRGHEVNFICADDAHGTPIMLKAQQLGITPEQMIGEMRHEHQTDFAGFNISYDNYHSTHSDENRELSELIYTRLKENGFIKNRTISQLYDPEKGMFLPDRFVKGTCPKCKSADQYGDNCEVCGATYSPTELIEPKSVVSGATPVMRDSEHFFFDLPSFSEMLQAWTRSGALQEQVANKMQEWFESGLQQWDISRDAPYFGFEIPNAPGKYFYVWLDAPIGYMGSFKNLCDKRGDTTSFEEYWKKDSDAELYHFIGKDIVYFHSLFWPAMLEGSNFRKPTNLFVHGYVTVNGAKMSKSRGTFIKASTWLNHFDADSLRYYYTAKLSSRIDDIDLNLEDFVQRVNADIVNKVVNLASRNAGFINKRFDGVLAAELADPQLYKTFTDAAAAIGEAWESREFGKAIREIMALADVANRYVDEQAPWVVAKQEGRDADLQAICSMGINLFRVLMTYLKPVLPTLSERVEAFLNCELSWEGIQQPLLGHKINAFKALYNRIDMKQVEALVDASKEEVKAAAAPVTGPLADSPIQETITFDDFAKVDLRVALIENAGFVEGSDKLLRLTLDLGGEKRNVFSGIRSAYPDPRALIGRQTVMVANLAPRKMRFGVSEGMVMAAGPGGKDIFLLSPDDGAKPGQQVK</sequence>
<name>SYM_SALAR</name>
<keyword id="KW-0030">Aminoacyl-tRNA synthetase</keyword>
<keyword id="KW-0067">ATP-binding</keyword>
<keyword id="KW-0963">Cytoplasm</keyword>
<keyword id="KW-0436">Ligase</keyword>
<keyword id="KW-0479">Metal-binding</keyword>
<keyword id="KW-0547">Nucleotide-binding</keyword>
<keyword id="KW-0648">Protein biosynthesis</keyword>
<keyword id="KW-1185">Reference proteome</keyword>
<keyword id="KW-0694">RNA-binding</keyword>
<keyword id="KW-0820">tRNA-binding</keyword>
<keyword id="KW-0862">Zinc</keyword>
<protein>
    <recommendedName>
        <fullName evidence="1">Methionine--tRNA ligase</fullName>
        <ecNumber evidence="1">6.1.1.10</ecNumber>
    </recommendedName>
    <alternativeName>
        <fullName evidence="1">Methionyl-tRNA synthetase</fullName>
        <shortName evidence="1">MetRS</shortName>
    </alternativeName>
</protein>
<organism>
    <name type="scientific">Salmonella arizonae (strain ATCC BAA-731 / CDC346-86 / RSK2980)</name>
    <dbReference type="NCBI Taxonomy" id="41514"/>
    <lineage>
        <taxon>Bacteria</taxon>
        <taxon>Pseudomonadati</taxon>
        <taxon>Pseudomonadota</taxon>
        <taxon>Gammaproteobacteria</taxon>
        <taxon>Enterobacterales</taxon>
        <taxon>Enterobacteriaceae</taxon>
        <taxon>Salmonella</taxon>
    </lineage>
</organism>
<evidence type="ECO:0000255" key="1">
    <source>
        <dbReference type="HAMAP-Rule" id="MF_00098"/>
    </source>
</evidence>
<evidence type="ECO:0000305" key="2"/>
<dbReference type="EC" id="6.1.1.10" evidence="1"/>
<dbReference type="EMBL" id="CP000880">
    <property type="protein sequence ID" value="ABX20666.1"/>
    <property type="status" value="ALT_INIT"/>
    <property type="molecule type" value="Genomic_DNA"/>
</dbReference>
<dbReference type="SMR" id="A9MKV0"/>
<dbReference type="STRING" id="41514.SARI_00743"/>
<dbReference type="KEGG" id="ses:SARI_00743"/>
<dbReference type="HOGENOM" id="CLU_009710_7_0_6"/>
<dbReference type="Proteomes" id="UP000002084">
    <property type="component" value="Chromosome"/>
</dbReference>
<dbReference type="GO" id="GO:0005829">
    <property type="term" value="C:cytosol"/>
    <property type="evidence" value="ECO:0007669"/>
    <property type="project" value="TreeGrafter"/>
</dbReference>
<dbReference type="GO" id="GO:0005524">
    <property type="term" value="F:ATP binding"/>
    <property type="evidence" value="ECO:0007669"/>
    <property type="project" value="UniProtKB-UniRule"/>
</dbReference>
<dbReference type="GO" id="GO:0046872">
    <property type="term" value="F:metal ion binding"/>
    <property type="evidence" value="ECO:0007669"/>
    <property type="project" value="UniProtKB-KW"/>
</dbReference>
<dbReference type="GO" id="GO:0004825">
    <property type="term" value="F:methionine-tRNA ligase activity"/>
    <property type="evidence" value="ECO:0007669"/>
    <property type="project" value="UniProtKB-UniRule"/>
</dbReference>
<dbReference type="GO" id="GO:0000049">
    <property type="term" value="F:tRNA binding"/>
    <property type="evidence" value="ECO:0007669"/>
    <property type="project" value="UniProtKB-KW"/>
</dbReference>
<dbReference type="GO" id="GO:0006431">
    <property type="term" value="P:methionyl-tRNA aminoacylation"/>
    <property type="evidence" value="ECO:0007669"/>
    <property type="project" value="UniProtKB-UniRule"/>
</dbReference>
<dbReference type="CDD" id="cd07957">
    <property type="entry name" value="Anticodon_Ia_Met"/>
    <property type="match status" value="1"/>
</dbReference>
<dbReference type="CDD" id="cd00814">
    <property type="entry name" value="MetRS_core"/>
    <property type="match status" value="1"/>
</dbReference>
<dbReference type="CDD" id="cd02800">
    <property type="entry name" value="tRNA_bind_EcMetRS_like"/>
    <property type="match status" value="1"/>
</dbReference>
<dbReference type="FunFam" id="1.10.730.10:FF:000005">
    <property type="entry name" value="Methionine--tRNA ligase"/>
    <property type="match status" value="1"/>
</dbReference>
<dbReference type="FunFam" id="2.20.28.20:FF:000001">
    <property type="entry name" value="Methionine--tRNA ligase"/>
    <property type="match status" value="1"/>
</dbReference>
<dbReference type="FunFam" id="2.40.50.140:FF:000042">
    <property type="entry name" value="Methionine--tRNA ligase"/>
    <property type="match status" value="1"/>
</dbReference>
<dbReference type="Gene3D" id="3.40.50.620">
    <property type="entry name" value="HUPs"/>
    <property type="match status" value="1"/>
</dbReference>
<dbReference type="Gene3D" id="1.10.730.10">
    <property type="entry name" value="Isoleucyl-tRNA Synthetase, Domain 1"/>
    <property type="match status" value="1"/>
</dbReference>
<dbReference type="Gene3D" id="2.20.28.20">
    <property type="entry name" value="Methionyl-tRNA synthetase, Zn-domain"/>
    <property type="match status" value="1"/>
</dbReference>
<dbReference type="Gene3D" id="2.40.50.140">
    <property type="entry name" value="Nucleic acid-binding proteins"/>
    <property type="match status" value="1"/>
</dbReference>
<dbReference type="HAMAP" id="MF_00098">
    <property type="entry name" value="Met_tRNA_synth_type1"/>
    <property type="match status" value="1"/>
</dbReference>
<dbReference type="InterPro" id="IPR001412">
    <property type="entry name" value="aa-tRNA-synth_I_CS"/>
</dbReference>
<dbReference type="InterPro" id="IPR041872">
    <property type="entry name" value="Anticodon_Met"/>
</dbReference>
<dbReference type="InterPro" id="IPR004495">
    <property type="entry name" value="Met-tRNA-synth_bsu_C"/>
</dbReference>
<dbReference type="InterPro" id="IPR023458">
    <property type="entry name" value="Met-tRNA_ligase_1"/>
</dbReference>
<dbReference type="InterPro" id="IPR014758">
    <property type="entry name" value="Met-tRNA_synth"/>
</dbReference>
<dbReference type="InterPro" id="IPR015413">
    <property type="entry name" value="Methionyl/Leucyl_tRNA_Synth"/>
</dbReference>
<dbReference type="InterPro" id="IPR033911">
    <property type="entry name" value="MetRS_core"/>
</dbReference>
<dbReference type="InterPro" id="IPR029038">
    <property type="entry name" value="MetRS_Zn"/>
</dbReference>
<dbReference type="InterPro" id="IPR012340">
    <property type="entry name" value="NA-bd_OB-fold"/>
</dbReference>
<dbReference type="InterPro" id="IPR014729">
    <property type="entry name" value="Rossmann-like_a/b/a_fold"/>
</dbReference>
<dbReference type="InterPro" id="IPR002547">
    <property type="entry name" value="tRNA-bd_dom"/>
</dbReference>
<dbReference type="InterPro" id="IPR009080">
    <property type="entry name" value="tRNAsynth_Ia_anticodon-bd"/>
</dbReference>
<dbReference type="NCBIfam" id="TIGR00398">
    <property type="entry name" value="metG"/>
    <property type="match status" value="1"/>
</dbReference>
<dbReference type="NCBIfam" id="TIGR00399">
    <property type="entry name" value="metG_C_term"/>
    <property type="match status" value="1"/>
</dbReference>
<dbReference type="NCBIfam" id="NF001100">
    <property type="entry name" value="PRK00133.1"/>
    <property type="match status" value="1"/>
</dbReference>
<dbReference type="PANTHER" id="PTHR45765">
    <property type="entry name" value="METHIONINE--TRNA LIGASE"/>
    <property type="match status" value="1"/>
</dbReference>
<dbReference type="PANTHER" id="PTHR45765:SF1">
    <property type="entry name" value="METHIONINE--TRNA LIGASE, CYTOPLASMIC"/>
    <property type="match status" value="1"/>
</dbReference>
<dbReference type="Pfam" id="PF19303">
    <property type="entry name" value="Anticodon_3"/>
    <property type="match status" value="1"/>
</dbReference>
<dbReference type="Pfam" id="PF09334">
    <property type="entry name" value="tRNA-synt_1g"/>
    <property type="match status" value="1"/>
</dbReference>
<dbReference type="Pfam" id="PF01588">
    <property type="entry name" value="tRNA_bind"/>
    <property type="match status" value="1"/>
</dbReference>
<dbReference type="PRINTS" id="PR01041">
    <property type="entry name" value="TRNASYNTHMET"/>
</dbReference>
<dbReference type="SUPFAM" id="SSF47323">
    <property type="entry name" value="Anticodon-binding domain of a subclass of class I aminoacyl-tRNA synthetases"/>
    <property type="match status" value="1"/>
</dbReference>
<dbReference type="SUPFAM" id="SSF57770">
    <property type="entry name" value="Methionyl-tRNA synthetase (MetRS), Zn-domain"/>
    <property type="match status" value="1"/>
</dbReference>
<dbReference type="SUPFAM" id="SSF50249">
    <property type="entry name" value="Nucleic acid-binding proteins"/>
    <property type="match status" value="1"/>
</dbReference>
<dbReference type="SUPFAM" id="SSF52374">
    <property type="entry name" value="Nucleotidylyl transferase"/>
    <property type="match status" value="1"/>
</dbReference>
<dbReference type="PROSITE" id="PS00178">
    <property type="entry name" value="AA_TRNA_LIGASE_I"/>
    <property type="match status" value="1"/>
</dbReference>
<dbReference type="PROSITE" id="PS50886">
    <property type="entry name" value="TRBD"/>
    <property type="match status" value="1"/>
</dbReference>